<comment type="function">
    <text evidence="1">This protein binds to 23S rRNA in the presence of protein L20.</text>
</comment>
<comment type="subunit">
    <text evidence="1">Part of the 50S ribosomal subunit. Contacts protein L20.</text>
</comment>
<comment type="similarity">
    <text evidence="1">Belongs to the bacterial ribosomal protein bL21 family.</text>
</comment>
<dbReference type="EMBL" id="CP000679">
    <property type="protein sequence ID" value="ABP67160.1"/>
    <property type="molecule type" value="Genomic_DNA"/>
</dbReference>
<dbReference type="RefSeq" id="WP_011917095.1">
    <property type="nucleotide sequence ID" value="NC_009437.1"/>
</dbReference>
<dbReference type="SMR" id="A4XJS5"/>
<dbReference type="STRING" id="351627.Csac_1568"/>
<dbReference type="GeneID" id="31772468"/>
<dbReference type="KEGG" id="csc:Csac_1568"/>
<dbReference type="eggNOG" id="COG0261">
    <property type="taxonomic scope" value="Bacteria"/>
</dbReference>
<dbReference type="HOGENOM" id="CLU_061463_3_2_9"/>
<dbReference type="OrthoDB" id="9813334at2"/>
<dbReference type="Proteomes" id="UP000000256">
    <property type="component" value="Chromosome"/>
</dbReference>
<dbReference type="GO" id="GO:0005737">
    <property type="term" value="C:cytoplasm"/>
    <property type="evidence" value="ECO:0007669"/>
    <property type="project" value="UniProtKB-ARBA"/>
</dbReference>
<dbReference type="GO" id="GO:1990904">
    <property type="term" value="C:ribonucleoprotein complex"/>
    <property type="evidence" value="ECO:0007669"/>
    <property type="project" value="UniProtKB-KW"/>
</dbReference>
<dbReference type="GO" id="GO:0005840">
    <property type="term" value="C:ribosome"/>
    <property type="evidence" value="ECO:0007669"/>
    <property type="project" value="UniProtKB-KW"/>
</dbReference>
<dbReference type="GO" id="GO:0019843">
    <property type="term" value="F:rRNA binding"/>
    <property type="evidence" value="ECO:0007669"/>
    <property type="project" value="UniProtKB-UniRule"/>
</dbReference>
<dbReference type="GO" id="GO:0003735">
    <property type="term" value="F:structural constituent of ribosome"/>
    <property type="evidence" value="ECO:0007669"/>
    <property type="project" value="InterPro"/>
</dbReference>
<dbReference type="GO" id="GO:0006412">
    <property type="term" value="P:translation"/>
    <property type="evidence" value="ECO:0007669"/>
    <property type="project" value="UniProtKB-UniRule"/>
</dbReference>
<dbReference type="HAMAP" id="MF_01363">
    <property type="entry name" value="Ribosomal_bL21"/>
    <property type="match status" value="1"/>
</dbReference>
<dbReference type="InterPro" id="IPR028909">
    <property type="entry name" value="bL21-like"/>
</dbReference>
<dbReference type="InterPro" id="IPR036164">
    <property type="entry name" value="bL21-like_sf"/>
</dbReference>
<dbReference type="InterPro" id="IPR001787">
    <property type="entry name" value="Ribosomal_bL21"/>
</dbReference>
<dbReference type="NCBIfam" id="TIGR00061">
    <property type="entry name" value="L21"/>
    <property type="match status" value="1"/>
</dbReference>
<dbReference type="PANTHER" id="PTHR21349">
    <property type="entry name" value="50S RIBOSOMAL PROTEIN L21"/>
    <property type="match status" value="1"/>
</dbReference>
<dbReference type="PANTHER" id="PTHR21349:SF0">
    <property type="entry name" value="LARGE RIBOSOMAL SUBUNIT PROTEIN BL21M"/>
    <property type="match status" value="1"/>
</dbReference>
<dbReference type="Pfam" id="PF00829">
    <property type="entry name" value="Ribosomal_L21p"/>
    <property type="match status" value="1"/>
</dbReference>
<dbReference type="SUPFAM" id="SSF141091">
    <property type="entry name" value="L21p-like"/>
    <property type="match status" value="1"/>
</dbReference>
<name>RL21_CALS8</name>
<protein>
    <recommendedName>
        <fullName evidence="1">Large ribosomal subunit protein bL21</fullName>
    </recommendedName>
    <alternativeName>
        <fullName evidence="2">50S ribosomal protein L21</fullName>
    </alternativeName>
</protein>
<organism>
    <name type="scientific">Caldicellulosiruptor saccharolyticus (strain ATCC 43494 / DSM 8903 / Tp8T 6331)</name>
    <dbReference type="NCBI Taxonomy" id="351627"/>
    <lineage>
        <taxon>Bacteria</taxon>
        <taxon>Bacillati</taxon>
        <taxon>Bacillota</taxon>
        <taxon>Bacillota incertae sedis</taxon>
        <taxon>Caldicellulosiruptorales</taxon>
        <taxon>Caldicellulosiruptoraceae</taxon>
        <taxon>Caldicellulosiruptor</taxon>
    </lineage>
</organism>
<sequence>MYAIIETGGKQYKVQEGDVLKVEKLKADVDSVVKIDKVLAISSDDGFVVGKPYVDGAYVEAKVLEHAKDKKIIVFTYKSKTGYHRKLGHRQWYTKIQITKIAK</sequence>
<evidence type="ECO:0000255" key="1">
    <source>
        <dbReference type="HAMAP-Rule" id="MF_01363"/>
    </source>
</evidence>
<evidence type="ECO:0000305" key="2"/>
<gene>
    <name evidence="1" type="primary">rplU</name>
    <name type="ordered locus">Csac_1568</name>
</gene>
<proteinExistence type="inferred from homology"/>
<feature type="chain" id="PRO_1000067817" description="Large ribosomal subunit protein bL21">
    <location>
        <begin position="1"/>
        <end position="103"/>
    </location>
</feature>
<keyword id="KW-0687">Ribonucleoprotein</keyword>
<keyword id="KW-0689">Ribosomal protein</keyword>
<keyword id="KW-0694">RNA-binding</keyword>
<keyword id="KW-0699">rRNA-binding</keyword>
<accession>A4XJS5</accession>
<reference key="1">
    <citation type="submission" date="2007-04" db="EMBL/GenBank/DDBJ databases">
        <title>Genome sequence of the thermophilic hydrogen-producing bacterium Caldicellulosiruptor saccharolyticus DSM 8903.</title>
        <authorList>
            <person name="Copeland A."/>
            <person name="Lucas S."/>
            <person name="Lapidus A."/>
            <person name="Barry K."/>
            <person name="Detter J.C."/>
            <person name="Glavina del Rio T."/>
            <person name="Hammon N."/>
            <person name="Israni S."/>
            <person name="Dalin E."/>
            <person name="Tice H."/>
            <person name="Pitluck S."/>
            <person name="Kiss H."/>
            <person name="Brettin T."/>
            <person name="Bruce D."/>
            <person name="Han C."/>
            <person name="Schmutz J."/>
            <person name="Larimer F."/>
            <person name="Land M."/>
            <person name="Hauser L."/>
            <person name="Kyrpides N."/>
            <person name="Lykidis A."/>
            <person name="van de Werken H.J.G."/>
            <person name="Verhaart M.R.A."/>
            <person name="VanFossen A.L."/>
            <person name="Lewis D.L."/>
            <person name="Nichols J.D."/>
            <person name="Goorissen H.P."/>
            <person name="van Niel E.W.J."/>
            <person name="Stams F.J.M."/>
            <person name="Willquist K.U."/>
            <person name="Ward D.E."/>
            <person name="van der Oost J."/>
            <person name="Kelly R.M."/>
            <person name="Kengen S.M.W."/>
            <person name="Richardson P."/>
        </authorList>
    </citation>
    <scope>NUCLEOTIDE SEQUENCE [LARGE SCALE GENOMIC DNA]</scope>
    <source>
        <strain>ATCC 43494 / DSM 8903 / Tp8T 6331</strain>
    </source>
</reference>